<gene>
    <name evidence="1" type="primary">lgt</name>
    <name type="ordered locus">SH2128</name>
</gene>
<feature type="chain" id="PRO_1000053506" description="Phosphatidylglycerol--prolipoprotein diacylglyceryl transferase">
    <location>
        <begin position="1"/>
        <end position="282"/>
    </location>
</feature>
<feature type="transmembrane region" description="Helical" evidence="1">
    <location>
        <begin position="18"/>
        <end position="38"/>
    </location>
</feature>
<feature type="transmembrane region" description="Helical" evidence="1">
    <location>
        <begin position="55"/>
        <end position="75"/>
    </location>
</feature>
<feature type="transmembrane region" description="Helical" evidence="1">
    <location>
        <begin position="89"/>
        <end position="109"/>
    </location>
</feature>
<feature type="transmembrane region" description="Helical" evidence="1">
    <location>
        <begin position="203"/>
        <end position="223"/>
    </location>
</feature>
<feature type="transmembrane region" description="Helical" evidence="1">
    <location>
        <begin position="235"/>
        <end position="255"/>
    </location>
</feature>
<feature type="binding site" evidence="1">
    <location>
        <position position="137"/>
    </location>
    <ligand>
        <name>a 1,2-diacyl-sn-glycero-3-phospho-(1'-sn-glycerol)</name>
        <dbReference type="ChEBI" id="CHEBI:64716"/>
    </ligand>
</feature>
<protein>
    <recommendedName>
        <fullName evidence="1">Phosphatidylglycerol--prolipoprotein diacylglyceryl transferase</fullName>
        <ecNumber evidence="1">2.5.1.145</ecNumber>
    </recommendedName>
</protein>
<keyword id="KW-1003">Cell membrane</keyword>
<keyword id="KW-0472">Membrane</keyword>
<keyword id="KW-0808">Transferase</keyword>
<keyword id="KW-0812">Transmembrane</keyword>
<keyword id="KW-1133">Transmembrane helix</keyword>
<evidence type="ECO:0000255" key="1">
    <source>
        <dbReference type="HAMAP-Rule" id="MF_01147"/>
    </source>
</evidence>
<sequence>MLFNLNYIDPTAFSIGPLSIKWYGIIIAVGILIGYFIAQESLKYVGLHKDRLVDVIFYSAIFGFIAARIYFVIFQWPYYAQNPIEIPMIWHGGIAIHGGLLGGFITGIIVCKIKNLNPFQIGDIVAPSIILAQGIGRWGNFMNHEAHGGPVSRTFLENLHIPEFIIRNMYIEGVYYHPTFLYESIWDILGFIILITIRKHLRVGETFTLYLIWYSIGRFFVEGLRTDSLMLTSHIRVAQLVSVILIIIGLVILIYRRIKYQPSLYKEAGPLTWNSSKAKVKS</sequence>
<dbReference type="EC" id="2.5.1.145" evidence="1"/>
<dbReference type="EMBL" id="AP006716">
    <property type="protein sequence ID" value="BAE05437.1"/>
    <property type="molecule type" value="Genomic_DNA"/>
</dbReference>
<dbReference type="RefSeq" id="WP_011276392.1">
    <property type="nucleotide sequence ID" value="NC_007168.1"/>
</dbReference>
<dbReference type="SMR" id="Q4L4I8"/>
<dbReference type="KEGG" id="sha:SH2128"/>
<dbReference type="eggNOG" id="COG0682">
    <property type="taxonomic scope" value="Bacteria"/>
</dbReference>
<dbReference type="HOGENOM" id="CLU_013386_1_2_9"/>
<dbReference type="OrthoDB" id="871140at2"/>
<dbReference type="UniPathway" id="UPA00664"/>
<dbReference type="Proteomes" id="UP000000543">
    <property type="component" value="Chromosome"/>
</dbReference>
<dbReference type="GO" id="GO:0005886">
    <property type="term" value="C:plasma membrane"/>
    <property type="evidence" value="ECO:0007669"/>
    <property type="project" value="UniProtKB-SubCell"/>
</dbReference>
<dbReference type="GO" id="GO:0008961">
    <property type="term" value="F:phosphatidylglycerol-prolipoprotein diacylglyceryl transferase activity"/>
    <property type="evidence" value="ECO:0007669"/>
    <property type="project" value="UniProtKB-UniRule"/>
</dbReference>
<dbReference type="GO" id="GO:0042158">
    <property type="term" value="P:lipoprotein biosynthetic process"/>
    <property type="evidence" value="ECO:0007669"/>
    <property type="project" value="UniProtKB-UniRule"/>
</dbReference>
<dbReference type="HAMAP" id="MF_01147">
    <property type="entry name" value="Lgt"/>
    <property type="match status" value="1"/>
</dbReference>
<dbReference type="InterPro" id="IPR001640">
    <property type="entry name" value="Lgt"/>
</dbReference>
<dbReference type="NCBIfam" id="TIGR00544">
    <property type="entry name" value="lgt"/>
    <property type="match status" value="1"/>
</dbReference>
<dbReference type="PANTHER" id="PTHR30589:SF0">
    <property type="entry name" value="PHOSPHATIDYLGLYCEROL--PROLIPOPROTEIN DIACYLGLYCERYL TRANSFERASE"/>
    <property type="match status" value="1"/>
</dbReference>
<dbReference type="PANTHER" id="PTHR30589">
    <property type="entry name" value="PROLIPOPROTEIN DIACYLGLYCERYL TRANSFERASE"/>
    <property type="match status" value="1"/>
</dbReference>
<dbReference type="Pfam" id="PF01790">
    <property type="entry name" value="LGT"/>
    <property type="match status" value="1"/>
</dbReference>
<dbReference type="PROSITE" id="PS01311">
    <property type="entry name" value="LGT"/>
    <property type="match status" value="1"/>
</dbReference>
<comment type="function">
    <text evidence="1">Catalyzes the transfer of the diacylglyceryl group from phosphatidylglycerol to the sulfhydryl group of the N-terminal cysteine of a prolipoprotein, the first step in the formation of mature lipoproteins.</text>
</comment>
<comment type="catalytic activity">
    <reaction evidence="1">
        <text>L-cysteinyl-[prolipoprotein] + a 1,2-diacyl-sn-glycero-3-phospho-(1'-sn-glycerol) = an S-1,2-diacyl-sn-glyceryl-L-cysteinyl-[prolipoprotein] + sn-glycerol 1-phosphate + H(+)</text>
        <dbReference type="Rhea" id="RHEA:56712"/>
        <dbReference type="Rhea" id="RHEA-COMP:14679"/>
        <dbReference type="Rhea" id="RHEA-COMP:14680"/>
        <dbReference type="ChEBI" id="CHEBI:15378"/>
        <dbReference type="ChEBI" id="CHEBI:29950"/>
        <dbReference type="ChEBI" id="CHEBI:57685"/>
        <dbReference type="ChEBI" id="CHEBI:64716"/>
        <dbReference type="ChEBI" id="CHEBI:140658"/>
        <dbReference type="EC" id="2.5.1.145"/>
    </reaction>
</comment>
<comment type="pathway">
    <text evidence="1">Protein modification; lipoprotein biosynthesis (diacylglyceryl transfer).</text>
</comment>
<comment type="subcellular location">
    <subcellularLocation>
        <location evidence="1">Cell membrane</location>
        <topology evidence="1">Multi-pass membrane protein</topology>
    </subcellularLocation>
</comment>
<comment type="similarity">
    <text evidence="1">Belongs to the Lgt family.</text>
</comment>
<accession>Q4L4I8</accession>
<reference key="1">
    <citation type="journal article" date="2005" name="J. Bacteriol.">
        <title>Whole-genome sequencing of Staphylococcus haemolyticus uncovers the extreme plasticity of its genome and the evolution of human-colonizing staphylococcal species.</title>
        <authorList>
            <person name="Takeuchi F."/>
            <person name="Watanabe S."/>
            <person name="Baba T."/>
            <person name="Yuzawa H."/>
            <person name="Ito T."/>
            <person name="Morimoto Y."/>
            <person name="Kuroda M."/>
            <person name="Cui L."/>
            <person name="Takahashi M."/>
            <person name="Ankai A."/>
            <person name="Baba S."/>
            <person name="Fukui S."/>
            <person name="Lee J.C."/>
            <person name="Hiramatsu K."/>
        </authorList>
    </citation>
    <scope>NUCLEOTIDE SEQUENCE [LARGE SCALE GENOMIC DNA]</scope>
    <source>
        <strain>JCSC1435</strain>
    </source>
</reference>
<organism>
    <name type="scientific">Staphylococcus haemolyticus (strain JCSC1435)</name>
    <dbReference type="NCBI Taxonomy" id="279808"/>
    <lineage>
        <taxon>Bacteria</taxon>
        <taxon>Bacillati</taxon>
        <taxon>Bacillota</taxon>
        <taxon>Bacilli</taxon>
        <taxon>Bacillales</taxon>
        <taxon>Staphylococcaceae</taxon>
        <taxon>Staphylococcus</taxon>
    </lineage>
</organism>
<proteinExistence type="inferred from homology"/>
<name>LGT_STAHJ</name>